<organism>
    <name type="scientific">Coxiella burnetii (strain CbuG_Q212)</name>
    <name type="common">Coxiella burnetii (strain Q212)</name>
    <dbReference type="NCBI Taxonomy" id="434923"/>
    <lineage>
        <taxon>Bacteria</taxon>
        <taxon>Pseudomonadati</taxon>
        <taxon>Pseudomonadota</taxon>
        <taxon>Gammaproteobacteria</taxon>
        <taxon>Legionellales</taxon>
        <taxon>Coxiellaceae</taxon>
        <taxon>Coxiella</taxon>
    </lineage>
</organism>
<accession>B6IZN9</accession>
<proteinExistence type="inferred from homology"/>
<name>PLSY_COXB2</name>
<sequence length="193" mass="20875">MAFIISIIIAYLLGSLSFAVIVAKLMKLPDPRTTGSGNAGATNMLRVGGRQAAFYVLLGDAAKGLIAVLIARFLNVQGVSLAFVGLVAVLGHLFPVYFKFRGGKGVATMMGVLLGLSFWIALFVIATWVIVVSIFRYSSVAALVSAVAAPIYTIIAGRTDYLFPVLIIAILLIWKHWENFQRLRKGTEDKVKL</sequence>
<reference key="1">
    <citation type="journal article" date="2009" name="Infect. Immun.">
        <title>Comparative genomics reveal extensive transposon-mediated genomic plasticity and diversity among potential effector proteins within the genus Coxiella.</title>
        <authorList>
            <person name="Beare P.A."/>
            <person name="Unsworth N."/>
            <person name="Andoh M."/>
            <person name="Voth D.E."/>
            <person name="Omsland A."/>
            <person name="Gilk S.D."/>
            <person name="Williams K.P."/>
            <person name="Sobral B.W."/>
            <person name="Kupko J.J. III"/>
            <person name="Porcella S.F."/>
            <person name="Samuel J.E."/>
            <person name="Heinzen R.A."/>
        </authorList>
    </citation>
    <scope>NUCLEOTIDE SEQUENCE [LARGE SCALE GENOMIC DNA]</scope>
    <source>
        <strain>CbuG_Q212</strain>
    </source>
</reference>
<comment type="function">
    <text evidence="1">Catalyzes the transfer of an acyl group from acyl-phosphate (acyl-PO(4)) to glycerol-3-phosphate (G3P) to form lysophosphatidic acid (LPA). This enzyme utilizes acyl-phosphate as fatty acyl donor, but not acyl-CoA or acyl-ACP.</text>
</comment>
<comment type="catalytic activity">
    <reaction evidence="1">
        <text>an acyl phosphate + sn-glycerol 3-phosphate = a 1-acyl-sn-glycero-3-phosphate + phosphate</text>
        <dbReference type="Rhea" id="RHEA:34075"/>
        <dbReference type="ChEBI" id="CHEBI:43474"/>
        <dbReference type="ChEBI" id="CHEBI:57597"/>
        <dbReference type="ChEBI" id="CHEBI:57970"/>
        <dbReference type="ChEBI" id="CHEBI:59918"/>
        <dbReference type="EC" id="2.3.1.275"/>
    </reaction>
</comment>
<comment type="pathway">
    <text evidence="1">Lipid metabolism; phospholipid metabolism.</text>
</comment>
<comment type="subunit">
    <text evidence="1">Probably interacts with PlsX.</text>
</comment>
<comment type="subcellular location">
    <subcellularLocation>
        <location evidence="1">Cell inner membrane</location>
        <topology evidence="1">Multi-pass membrane protein</topology>
    </subcellularLocation>
</comment>
<comment type="similarity">
    <text evidence="1">Belongs to the PlsY family.</text>
</comment>
<keyword id="KW-0997">Cell inner membrane</keyword>
<keyword id="KW-1003">Cell membrane</keyword>
<keyword id="KW-0444">Lipid biosynthesis</keyword>
<keyword id="KW-0443">Lipid metabolism</keyword>
<keyword id="KW-0472">Membrane</keyword>
<keyword id="KW-0594">Phospholipid biosynthesis</keyword>
<keyword id="KW-1208">Phospholipid metabolism</keyword>
<keyword id="KW-0808">Transferase</keyword>
<keyword id="KW-0812">Transmembrane</keyword>
<keyword id="KW-1133">Transmembrane helix</keyword>
<evidence type="ECO:0000255" key="1">
    <source>
        <dbReference type="HAMAP-Rule" id="MF_01043"/>
    </source>
</evidence>
<gene>
    <name evidence="1" type="primary">plsY</name>
    <name type="ordered locus">CbuG_0771</name>
</gene>
<protein>
    <recommendedName>
        <fullName evidence="1">Glycerol-3-phosphate acyltransferase</fullName>
    </recommendedName>
    <alternativeName>
        <fullName evidence="1">Acyl-PO4 G3P acyltransferase</fullName>
    </alternativeName>
    <alternativeName>
        <fullName evidence="1">Acyl-phosphate--glycerol-3-phosphate acyltransferase</fullName>
    </alternativeName>
    <alternativeName>
        <fullName evidence="1">G3P acyltransferase</fullName>
        <shortName evidence="1">GPAT</shortName>
        <ecNumber evidence="1">2.3.1.275</ecNumber>
    </alternativeName>
    <alternativeName>
        <fullName evidence="1">Lysophosphatidic acid synthase</fullName>
        <shortName evidence="1">LPA synthase</shortName>
    </alternativeName>
</protein>
<dbReference type="EC" id="2.3.1.275" evidence="1"/>
<dbReference type="EMBL" id="CP001019">
    <property type="protein sequence ID" value="ACJ18167.1"/>
    <property type="molecule type" value="Genomic_DNA"/>
</dbReference>
<dbReference type="RefSeq" id="WP_012569927.1">
    <property type="nucleotide sequence ID" value="NC_011527.1"/>
</dbReference>
<dbReference type="SMR" id="B6IZN9"/>
<dbReference type="KEGG" id="cbg:CbuG_0771"/>
<dbReference type="HOGENOM" id="CLU_081254_0_0_6"/>
<dbReference type="UniPathway" id="UPA00085"/>
<dbReference type="GO" id="GO:0005886">
    <property type="term" value="C:plasma membrane"/>
    <property type="evidence" value="ECO:0007669"/>
    <property type="project" value="UniProtKB-SubCell"/>
</dbReference>
<dbReference type="GO" id="GO:0043772">
    <property type="term" value="F:acyl-phosphate glycerol-3-phosphate acyltransferase activity"/>
    <property type="evidence" value="ECO:0007669"/>
    <property type="project" value="UniProtKB-UniRule"/>
</dbReference>
<dbReference type="GO" id="GO:0008654">
    <property type="term" value="P:phospholipid biosynthetic process"/>
    <property type="evidence" value="ECO:0007669"/>
    <property type="project" value="UniProtKB-UniRule"/>
</dbReference>
<dbReference type="HAMAP" id="MF_01043">
    <property type="entry name" value="PlsY"/>
    <property type="match status" value="1"/>
</dbReference>
<dbReference type="InterPro" id="IPR003811">
    <property type="entry name" value="G3P_acylTferase_PlsY"/>
</dbReference>
<dbReference type="NCBIfam" id="TIGR00023">
    <property type="entry name" value="glycerol-3-phosphate 1-O-acyltransferase PlsY"/>
    <property type="match status" value="1"/>
</dbReference>
<dbReference type="PANTHER" id="PTHR30309:SF0">
    <property type="entry name" value="GLYCEROL-3-PHOSPHATE ACYLTRANSFERASE-RELATED"/>
    <property type="match status" value="1"/>
</dbReference>
<dbReference type="PANTHER" id="PTHR30309">
    <property type="entry name" value="INNER MEMBRANE PROTEIN YGIH"/>
    <property type="match status" value="1"/>
</dbReference>
<dbReference type="Pfam" id="PF02660">
    <property type="entry name" value="G3P_acyltransf"/>
    <property type="match status" value="1"/>
</dbReference>
<dbReference type="SMART" id="SM01207">
    <property type="entry name" value="G3P_acyltransf"/>
    <property type="match status" value="1"/>
</dbReference>
<feature type="chain" id="PRO_1000136077" description="Glycerol-3-phosphate acyltransferase">
    <location>
        <begin position="1"/>
        <end position="193"/>
    </location>
</feature>
<feature type="transmembrane region" description="Helical" evidence="1">
    <location>
        <begin position="2"/>
        <end position="22"/>
    </location>
</feature>
<feature type="transmembrane region" description="Helical" evidence="1">
    <location>
        <begin position="51"/>
        <end position="71"/>
    </location>
</feature>
<feature type="transmembrane region" description="Helical" evidence="1">
    <location>
        <begin position="78"/>
        <end position="98"/>
    </location>
</feature>
<feature type="transmembrane region" description="Helical" evidence="1">
    <location>
        <begin position="112"/>
        <end position="132"/>
    </location>
</feature>
<feature type="transmembrane region" description="Helical" evidence="1">
    <location>
        <begin position="154"/>
        <end position="174"/>
    </location>
</feature>